<keyword id="KW-0027">Amidation</keyword>
<keyword id="KW-0165">Cleavage on pair of basic residues</keyword>
<keyword id="KW-1015">Disulfide bond</keyword>
<keyword id="KW-0964">Secreted</keyword>
<keyword id="KW-0732">Signal</keyword>
<keyword id="KW-0800">Toxin</keyword>
<name>CM38_CONRE</name>
<reference key="1">
    <citation type="journal article" date="2017" name="FEBS J.">
        <title>Structural plasticity of Mini-M conotoxins: expression of all mini-M subtypes by Conus regius.</title>
        <authorList>
            <person name="Franco A."/>
            <person name="Dovell S."/>
            <person name="Moller C."/>
            <person name="Grandal M."/>
            <person name="Clark E."/>
            <person name="Mari F."/>
        </authorList>
    </citation>
    <scope>NUCLEOTIDE SEQUENCE [MRNA]</scope>
    <source>
        <tissue>Venom duct</tissue>
    </source>
</reference>
<organism>
    <name type="scientific">Conus regius</name>
    <name type="common">Crown cone</name>
    <dbReference type="NCBI Taxonomy" id="101314"/>
    <lineage>
        <taxon>Eukaryota</taxon>
        <taxon>Metazoa</taxon>
        <taxon>Spiralia</taxon>
        <taxon>Lophotrochozoa</taxon>
        <taxon>Mollusca</taxon>
        <taxon>Gastropoda</taxon>
        <taxon>Caenogastropoda</taxon>
        <taxon>Neogastropoda</taxon>
        <taxon>Conoidea</taxon>
        <taxon>Conidae</taxon>
        <taxon>Conus</taxon>
        <taxon>Stephanoconus</taxon>
    </lineage>
</organism>
<feature type="signal peptide" evidence="2">
    <location>
        <begin position="1"/>
        <end position="22"/>
    </location>
</feature>
<feature type="propeptide" id="PRO_0000444775" evidence="5">
    <location>
        <begin position="23"/>
        <end position="50"/>
    </location>
</feature>
<feature type="peptide" id="PRO_5014382186" description="Conotoxin reg3.8" evidence="5">
    <location>
        <begin position="51"/>
        <end position="66"/>
    </location>
</feature>
<feature type="modified residue" description="Cysteine amide" evidence="4">
    <location>
        <position position="66"/>
    </location>
</feature>
<feature type="disulfide bond" evidence="1">
    <location>
        <begin position="51"/>
        <end position="65"/>
    </location>
</feature>
<feature type="disulfide bond" evidence="1">
    <location>
        <begin position="52"/>
        <end position="63"/>
    </location>
</feature>
<feature type="disulfide bond" evidence="1">
    <location>
        <begin position="57"/>
        <end position="66"/>
    </location>
</feature>
<protein>
    <recommendedName>
        <fullName evidence="3">Conotoxin reg3.8</fullName>
        <shortName evidence="6">Rg3.8</shortName>
    </recommendedName>
</protein>
<sequence>MMSKLGVLLTICLLLFPLSVLPLDGDQLADQPARHAQSAERNARFHPVKRCCPFPMCYQVPHCPCCG</sequence>
<evidence type="ECO:0000250" key="1">
    <source>
        <dbReference type="UniProtKB" id="Q5EHP3"/>
    </source>
</evidence>
<evidence type="ECO:0000255" key="2"/>
<evidence type="ECO:0000303" key="3">
    <source>
    </source>
</evidence>
<evidence type="ECO:0000305" key="4"/>
<evidence type="ECO:0000305" key="5">
    <source>
    </source>
</evidence>
<evidence type="ECO:0000312" key="6">
    <source>
        <dbReference type="EMBL" id="AUJ88066.1"/>
    </source>
</evidence>
<comment type="subcellular location">
    <subcellularLocation>
        <location evidence="5">Secreted</location>
    </subcellularLocation>
</comment>
<comment type="tissue specificity">
    <text evidence="5">Expressed by the venom duct.</text>
</comment>
<comment type="domain">
    <text evidence="4">The cysteine framework is III (CC-C-C-CC). Classified in the M-1 branch, since 1 residue stands between the fourth and the fifth cysteine residues.</text>
</comment>
<comment type="similarity">
    <text evidence="4">Belongs to the conotoxin M superfamily.</text>
</comment>
<proteinExistence type="inferred from homology"/>
<accession>A0A2I6EDL6</accession>
<dbReference type="EMBL" id="MF588942">
    <property type="protein sequence ID" value="AUJ88066.1"/>
    <property type="molecule type" value="mRNA"/>
</dbReference>
<dbReference type="GO" id="GO:0005576">
    <property type="term" value="C:extracellular region"/>
    <property type="evidence" value="ECO:0007669"/>
    <property type="project" value="UniProtKB-SubCell"/>
</dbReference>
<dbReference type="GO" id="GO:0008200">
    <property type="term" value="F:ion channel inhibitor activity"/>
    <property type="evidence" value="ECO:0007669"/>
    <property type="project" value="InterPro"/>
</dbReference>
<dbReference type="GO" id="GO:0090729">
    <property type="term" value="F:toxin activity"/>
    <property type="evidence" value="ECO:0007669"/>
    <property type="project" value="UniProtKB-KW"/>
</dbReference>
<dbReference type="InterPro" id="IPR004214">
    <property type="entry name" value="Conotoxin"/>
</dbReference>
<dbReference type="Pfam" id="PF02950">
    <property type="entry name" value="Conotoxin"/>
    <property type="match status" value="1"/>
</dbReference>